<protein>
    <recommendedName>
        <fullName evidence="1">RNA pyrophosphohydrolase</fullName>
        <ecNumber evidence="1">3.6.1.-</ecNumber>
    </recommendedName>
    <alternativeName>
        <fullName evidence="1">(Di)nucleoside polyphosphate hydrolase</fullName>
    </alternativeName>
</protein>
<reference key="1">
    <citation type="submission" date="2009-02" db="EMBL/GenBank/DDBJ databases">
        <title>Vibrio splendidus str. LGP32 complete genome.</title>
        <authorList>
            <person name="Mazel D."/>
            <person name="Le Roux F."/>
        </authorList>
    </citation>
    <scope>NUCLEOTIDE SEQUENCE [LARGE SCALE GENOMIC DNA]</scope>
    <source>
        <strain>LGP32</strain>
    </source>
</reference>
<organism>
    <name type="scientific">Vibrio atlanticus (strain LGP32)</name>
    <name type="common">Vibrio splendidus (strain Mel32)</name>
    <dbReference type="NCBI Taxonomy" id="575788"/>
    <lineage>
        <taxon>Bacteria</taxon>
        <taxon>Pseudomonadati</taxon>
        <taxon>Pseudomonadota</taxon>
        <taxon>Gammaproteobacteria</taxon>
        <taxon>Vibrionales</taxon>
        <taxon>Vibrionaceae</taxon>
        <taxon>Vibrio</taxon>
    </lineage>
</organism>
<feature type="chain" id="PRO_1000191852" description="RNA pyrophosphohydrolase">
    <location>
        <begin position="1"/>
        <end position="172"/>
    </location>
</feature>
<feature type="domain" description="Nudix hydrolase" evidence="1">
    <location>
        <begin position="6"/>
        <end position="149"/>
    </location>
</feature>
<feature type="short sequence motif" description="Nudix box">
    <location>
        <begin position="38"/>
        <end position="59"/>
    </location>
</feature>
<proteinExistence type="inferred from homology"/>
<accession>B7VJ74</accession>
<gene>
    <name evidence="1" type="primary">rppH</name>
    <name evidence="1" type="synonym">nudH</name>
    <name type="ordered locus">VS_0523</name>
</gene>
<dbReference type="EC" id="3.6.1.-" evidence="1"/>
<dbReference type="EMBL" id="FM954972">
    <property type="protein sequence ID" value="CAV17528.1"/>
    <property type="molecule type" value="Genomic_DNA"/>
</dbReference>
<dbReference type="SMR" id="B7VJ74"/>
<dbReference type="STRING" id="575788.VS_0523"/>
<dbReference type="KEGG" id="vsp:VS_0523"/>
<dbReference type="eggNOG" id="COG0494">
    <property type="taxonomic scope" value="Bacteria"/>
</dbReference>
<dbReference type="HOGENOM" id="CLU_087195_3_2_6"/>
<dbReference type="Proteomes" id="UP000009100">
    <property type="component" value="Chromosome 1"/>
</dbReference>
<dbReference type="GO" id="GO:0005737">
    <property type="term" value="C:cytoplasm"/>
    <property type="evidence" value="ECO:0007669"/>
    <property type="project" value="TreeGrafter"/>
</dbReference>
<dbReference type="GO" id="GO:0034353">
    <property type="term" value="F:mRNA 5'-diphosphatase activity"/>
    <property type="evidence" value="ECO:0007669"/>
    <property type="project" value="TreeGrafter"/>
</dbReference>
<dbReference type="GO" id="GO:0006402">
    <property type="term" value="P:mRNA catabolic process"/>
    <property type="evidence" value="ECO:0007669"/>
    <property type="project" value="TreeGrafter"/>
</dbReference>
<dbReference type="CDD" id="cd03671">
    <property type="entry name" value="NUDIX_Ap4A_hydrolase_plant_like"/>
    <property type="match status" value="1"/>
</dbReference>
<dbReference type="FunFam" id="3.90.79.10:FF:000001">
    <property type="entry name" value="RNA pyrophosphohydrolase"/>
    <property type="match status" value="1"/>
</dbReference>
<dbReference type="Gene3D" id="3.90.79.10">
    <property type="entry name" value="Nucleoside Triphosphate Pyrophosphohydrolase"/>
    <property type="match status" value="1"/>
</dbReference>
<dbReference type="HAMAP" id="MF_00298">
    <property type="entry name" value="Nudix_RppH"/>
    <property type="match status" value="1"/>
</dbReference>
<dbReference type="InterPro" id="IPR020476">
    <property type="entry name" value="Nudix_hydrolase"/>
</dbReference>
<dbReference type="InterPro" id="IPR015797">
    <property type="entry name" value="NUDIX_hydrolase-like_dom_sf"/>
</dbReference>
<dbReference type="InterPro" id="IPR020084">
    <property type="entry name" value="NUDIX_hydrolase_CS"/>
</dbReference>
<dbReference type="InterPro" id="IPR000086">
    <property type="entry name" value="NUDIX_hydrolase_dom"/>
</dbReference>
<dbReference type="InterPro" id="IPR022927">
    <property type="entry name" value="RppH"/>
</dbReference>
<dbReference type="NCBIfam" id="NF001934">
    <property type="entry name" value="PRK00714.1-1"/>
    <property type="match status" value="1"/>
</dbReference>
<dbReference type="NCBIfam" id="NF001936">
    <property type="entry name" value="PRK00714.1-3"/>
    <property type="match status" value="1"/>
</dbReference>
<dbReference type="NCBIfam" id="NF001937">
    <property type="entry name" value="PRK00714.1-4"/>
    <property type="match status" value="1"/>
</dbReference>
<dbReference type="NCBIfam" id="NF001938">
    <property type="entry name" value="PRK00714.1-5"/>
    <property type="match status" value="1"/>
</dbReference>
<dbReference type="PANTHER" id="PTHR23114">
    <property type="entry name" value="M7GPPPN-MRNA HYDROLASE"/>
    <property type="match status" value="1"/>
</dbReference>
<dbReference type="PANTHER" id="PTHR23114:SF17">
    <property type="entry name" value="M7GPPPN-MRNA HYDROLASE"/>
    <property type="match status" value="1"/>
</dbReference>
<dbReference type="Pfam" id="PF00293">
    <property type="entry name" value="NUDIX"/>
    <property type="match status" value="1"/>
</dbReference>
<dbReference type="PRINTS" id="PR00502">
    <property type="entry name" value="NUDIXFAMILY"/>
</dbReference>
<dbReference type="SUPFAM" id="SSF55811">
    <property type="entry name" value="Nudix"/>
    <property type="match status" value="1"/>
</dbReference>
<dbReference type="PROSITE" id="PS51462">
    <property type="entry name" value="NUDIX"/>
    <property type="match status" value="1"/>
</dbReference>
<dbReference type="PROSITE" id="PS00893">
    <property type="entry name" value="NUDIX_BOX"/>
    <property type="match status" value="1"/>
</dbReference>
<evidence type="ECO:0000255" key="1">
    <source>
        <dbReference type="HAMAP-Rule" id="MF_00298"/>
    </source>
</evidence>
<name>RPPH_VIBA3</name>
<keyword id="KW-0378">Hydrolase</keyword>
<comment type="function">
    <text evidence="1">Accelerates the degradation of transcripts by removing pyrophosphate from the 5'-end of triphosphorylated RNA, leading to a more labile monophosphorylated state that can stimulate subsequent ribonuclease cleavage.</text>
</comment>
<comment type="cofactor">
    <cofactor evidence="1">
        <name>a divalent metal cation</name>
        <dbReference type="ChEBI" id="CHEBI:60240"/>
    </cofactor>
</comment>
<comment type="similarity">
    <text evidence="1">Belongs to the Nudix hydrolase family. RppH subfamily.</text>
</comment>
<sequence length="172" mass="20589">MIDGDGYRLNVGIVICNNHGQVFWAKRYGQHSWQFPQGGIDEGETPEQAMYRELYEEVGLTKKDVKIVATSRHWLRYKLPKRLVRWDSKPVCIGQKQKWFLLRLDCDESHINMQRGSTPEFDGWRWVSYWYPVRQVVSFKRDVYRRAMKEFASLAMPFKERKTKGKRKLRRG</sequence>